<dbReference type="EMBL" id="M27925">
    <property type="protein sequence ID" value="AAA42100.1"/>
    <property type="molecule type" value="mRNA"/>
</dbReference>
<dbReference type="EMBL" id="M27926">
    <property type="protein sequence ID" value="AAA42101.1"/>
    <property type="molecule type" value="mRNA"/>
</dbReference>
<dbReference type="PIR" id="C30411">
    <property type="entry name" value="C30411"/>
</dbReference>
<dbReference type="RefSeq" id="NP_001029192.1">
    <property type="nucleotide sequence ID" value="NM_001034020.1"/>
</dbReference>
<dbReference type="RefSeq" id="NP_062032.1">
    <property type="nucleotide sequence ID" value="NM_019159.1"/>
</dbReference>
<dbReference type="PDB" id="1I7L">
    <property type="method" value="X-ray"/>
    <property type="resolution" value="2.35 A"/>
    <property type="chains" value="A/B=113-421"/>
</dbReference>
<dbReference type="PDB" id="1I7N">
    <property type="method" value="X-ray"/>
    <property type="resolution" value="1.90 A"/>
    <property type="chains" value="A/B=113-421"/>
</dbReference>
<dbReference type="PDBsum" id="1I7L"/>
<dbReference type="PDBsum" id="1I7N"/>
<dbReference type="SMR" id="Q63537"/>
<dbReference type="BioGRID" id="247859">
    <property type="interactions" value="6"/>
</dbReference>
<dbReference type="FunCoup" id="Q63537">
    <property type="interactions" value="1650"/>
</dbReference>
<dbReference type="IntAct" id="Q63537">
    <property type="interactions" value="4"/>
</dbReference>
<dbReference type="MINT" id="Q63537"/>
<dbReference type="STRING" id="10116.ENSRNOP00000011292"/>
<dbReference type="GlyGen" id="Q63537">
    <property type="glycosylation" value="3 sites, 1 O-linked glycan (1 site)"/>
</dbReference>
<dbReference type="iPTMnet" id="Q63537"/>
<dbReference type="PhosphoSitePlus" id="Q63537"/>
<dbReference type="SwissPalm" id="Q63537"/>
<dbReference type="jPOST" id="Q63537"/>
<dbReference type="PaxDb" id="10116-ENSRNOP00000011292"/>
<dbReference type="ABCD" id="Q63537">
    <property type="antibodies" value="1 sequenced antibody"/>
</dbReference>
<dbReference type="GeneID" id="29179"/>
<dbReference type="KEGG" id="rno:29179"/>
<dbReference type="UCSC" id="RGD:3798">
    <molecule id="Q63537-1"/>
    <property type="organism name" value="rat"/>
</dbReference>
<dbReference type="AGR" id="RGD:3798"/>
<dbReference type="CTD" id="6854"/>
<dbReference type="RGD" id="3798">
    <property type="gene designation" value="Syn2"/>
</dbReference>
<dbReference type="eggNOG" id="KOG3895">
    <property type="taxonomic scope" value="Eukaryota"/>
</dbReference>
<dbReference type="InParanoid" id="Q63537"/>
<dbReference type="PhylomeDB" id="Q63537"/>
<dbReference type="Reactome" id="R-RNO-181429">
    <property type="pathway name" value="Serotonin Neurotransmitter Release Cycle"/>
</dbReference>
<dbReference type="Reactome" id="R-RNO-212676">
    <property type="pathway name" value="Dopamine Neurotransmitter Release Cycle"/>
</dbReference>
<dbReference type="EvolutionaryTrace" id="Q63537"/>
<dbReference type="PRO" id="PR:Q63537"/>
<dbReference type="Proteomes" id="UP000002494">
    <property type="component" value="Unplaced"/>
</dbReference>
<dbReference type="GO" id="GO:0098850">
    <property type="term" value="C:extrinsic component of synaptic vesicle membrane"/>
    <property type="evidence" value="ECO:0000314"/>
    <property type="project" value="SynGO"/>
</dbReference>
<dbReference type="GO" id="GO:0098978">
    <property type="term" value="C:glutamatergic synapse"/>
    <property type="evidence" value="ECO:0000266"/>
    <property type="project" value="RGD"/>
</dbReference>
<dbReference type="GO" id="GO:0005886">
    <property type="term" value="C:plasma membrane"/>
    <property type="evidence" value="ECO:0000266"/>
    <property type="project" value="RGD"/>
</dbReference>
<dbReference type="GO" id="GO:0014069">
    <property type="term" value="C:postsynaptic density"/>
    <property type="evidence" value="ECO:0000266"/>
    <property type="project" value="RGD"/>
</dbReference>
<dbReference type="GO" id="GO:0098685">
    <property type="term" value="C:Schaffer collateral - CA1 synapse"/>
    <property type="evidence" value="ECO:0000266"/>
    <property type="project" value="RGD"/>
</dbReference>
<dbReference type="GO" id="GO:0031201">
    <property type="term" value="C:SNARE complex"/>
    <property type="evidence" value="ECO:0000266"/>
    <property type="project" value="RGD"/>
</dbReference>
<dbReference type="GO" id="GO:0045202">
    <property type="term" value="C:synapse"/>
    <property type="evidence" value="ECO:0000250"/>
    <property type="project" value="ParkinsonsUK-UCL"/>
</dbReference>
<dbReference type="GO" id="GO:0008021">
    <property type="term" value="C:synaptic vesicle"/>
    <property type="evidence" value="ECO:0000314"/>
    <property type="project" value="UniProtKB"/>
</dbReference>
<dbReference type="GO" id="GO:0030672">
    <property type="term" value="C:synaptic vesicle membrane"/>
    <property type="evidence" value="ECO:0000250"/>
    <property type="project" value="ParkinsonsUK-UCL"/>
</dbReference>
<dbReference type="GO" id="GO:0043195">
    <property type="term" value="C:terminal bouton"/>
    <property type="evidence" value="ECO:0007005"/>
    <property type="project" value="ParkinsonsUK-UCL"/>
</dbReference>
<dbReference type="GO" id="GO:0005524">
    <property type="term" value="F:ATP binding"/>
    <property type="evidence" value="ECO:0007669"/>
    <property type="project" value="InterPro"/>
</dbReference>
<dbReference type="GO" id="GO:0048306">
    <property type="term" value="F:calcium-dependent protein binding"/>
    <property type="evidence" value="ECO:0000353"/>
    <property type="project" value="RGD"/>
</dbReference>
<dbReference type="GO" id="GO:0008092">
    <property type="term" value="F:cytoskeletal protein binding"/>
    <property type="evidence" value="ECO:0000304"/>
    <property type="project" value="RGD"/>
</dbReference>
<dbReference type="GO" id="GO:0042802">
    <property type="term" value="F:identical protein binding"/>
    <property type="evidence" value="ECO:0000266"/>
    <property type="project" value="RGD"/>
</dbReference>
<dbReference type="GO" id="GO:0017156">
    <property type="term" value="P:calcium-ion regulated exocytosis"/>
    <property type="evidence" value="ECO:0000266"/>
    <property type="project" value="RGD"/>
</dbReference>
<dbReference type="GO" id="GO:0007269">
    <property type="term" value="P:neurotransmitter secretion"/>
    <property type="evidence" value="ECO:0000250"/>
    <property type="project" value="ParkinsonsUK-UCL"/>
</dbReference>
<dbReference type="GO" id="GO:0046928">
    <property type="term" value="P:regulation of neurotransmitter secretion"/>
    <property type="evidence" value="ECO:0000304"/>
    <property type="project" value="RGD"/>
</dbReference>
<dbReference type="GO" id="GO:0050808">
    <property type="term" value="P:synapse organization"/>
    <property type="evidence" value="ECO:0000318"/>
    <property type="project" value="GO_Central"/>
</dbReference>
<dbReference type="GO" id="GO:0097091">
    <property type="term" value="P:synaptic vesicle clustering"/>
    <property type="evidence" value="ECO:0000266"/>
    <property type="project" value="RGD"/>
</dbReference>
<dbReference type="GO" id="GO:0099504">
    <property type="term" value="P:synaptic vesicle cycle"/>
    <property type="evidence" value="ECO:0000266"/>
    <property type="project" value="RGD"/>
</dbReference>
<dbReference type="FunFam" id="3.30.1490.20:FF:000008">
    <property type="entry name" value="Synapsin I"/>
    <property type="match status" value="1"/>
</dbReference>
<dbReference type="FunFam" id="3.40.50.20:FF:000008">
    <property type="entry name" value="Synapsin III"/>
    <property type="match status" value="1"/>
</dbReference>
<dbReference type="FunFam" id="3.30.470.20:FF:000151">
    <property type="entry name" value="Synapsin-2"/>
    <property type="match status" value="1"/>
</dbReference>
<dbReference type="Gene3D" id="3.40.50.20">
    <property type="match status" value="1"/>
</dbReference>
<dbReference type="Gene3D" id="3.30.1490.20">
    <property type="entry name" value="ATP-grasp fold, A domain"/>
    <property type="match status" value="1"/>
</dbReference>
<dbReference type="Gene3D" id="3.30.470.20">
    <property type="entry name" value="ATP-grasp fold, B domain"/>
    <property type="match status" value="1"/>
</dbReference>
<dbReference type="InterPro" id="IPR013815">
    <property type="entry name" value="ATP_grasp_subdomain_1"/>
</dbReference>
<dbReference type="InterPro" id="IPR016185">
    <property type="entry name" value="PreATP-grasp_dom_sf"/>
</dbReference>
<dbReference type="InterPro" id="IPR001359">
    <property type="entry name" value="Synapsin"/>
</dbReference>
<dbReference type="InterPro" id="IPR020898">
    <property type="entry name" value="Synapsin_ATP-bd_dom"/>
</dbReference>
<dbReference type="InterPro" id="IPR019735">
    <property type="entry name" value="Synapsin_CS"/>
</dbReference>
<dbReference type="InterPro" id="IPR019736">
    <property type="entry name" value="Synapsin_P_site"/>
</dbReference>
<dbReference type="InterPro" id="IPR020897">
    <property type="entry name" value="Synapsin_pre-ATP-grasp_dom"/>
</dbReference>
<dbReference type="PANTHER" id="PTHR10841">
    <property type="entry name" value="SYNAPSIN"/>
    <property type="match status" value="1"/>
</dbReference>
<dbReference type="PANTHER" id="PTHR10841:SF20">
    <property type="entry name" value="SYNAPSIN-2"/>
    <property type="match status" value="1"/>
</dbReference>
<dbReference type="Pfam" id="PF02078">
    <property type="entry name" value="Synapsin"/>
    <property type="match status" value="1"/>
</dbReference>
<dbReference type="Pfam" id="PF02750">
    <property type="entry name" value="Synapsin_C"/>
    <property type="match status" value="1"/>
</dbReference>
<dbReference type="Pfam" id="PF10581">
    <property type="entry name" value="Synapsin_N"/>
    <property type="match status" value="1"/>
</dbReference>
<dbReference type="PRINTS" id="PR01368">
    <property type="entry name" value="SYNAPSIN"/>
</dbReference>
<dbReference type="SUPFAM" id="SSF56059">
    <property type="entry name" value="Glutathione synthetase ATP-binding domain-like"/>
    <property type="match status" value="1"/>
</dbReference>
<dbReference type="SUPFAM" id="SSF52440">
    <property type="entry name" value="PreATP-grasp domain"/>
    <property type="match status" value="1"/>
</dbReference>
<dbReference type="PROSITE" id="PS00415">
    <property type="entry name" value="SYNAPSIN_1"/>
    <property type="match status" value="1"/>
</dbReference>
<dbReference type="PROSITE" id="PS00416">
    <property type="entry name" value="SYNAPSIN_2"/>
    <property type="match status" value="1"/>
</dbReference>
<comment type="function">
    <text evidence="1">Neuronal phosphoprotein that coats synaptic vesicles, binds to the cytoskeleton, and is believed to function in the regulation of neurotransmitter release. May play a role in noradrenaline secretion by sympathetic neurons (By similarity).</text>
</comment>
<comment type="subunit">
    <text evidence="2 5">Can form oligomers with SYN1 (By similarity). Interacts with CAPON.</text>
</comment>
<comment type="subcellular location">
    <subcellularLocation>
        <location>Synapse</location>
    </subcellularLocation>
</comment>
<comment type="alternative products">
    <event type="alternative splicing"/>
    <isoform>
        <id>Q63537-1</id>
        <name>IIa</name>
        <sequence type="displayed"/>
    </isoform>
    <isoform>
        <id>Q63537-2</id>
        <name>IIb</name>
        <sequence type="described" ref="VSP_006322 VSP_006323"/>
    </isoform>
</comment>
<comment type="domain">
    <text>The A region binds phospholipids with a preference for negatively charged species.</text>
</comment>
<comment type="PTM">
    <text evidence="1 4">Phosphorylation at Ser-426 by MAPK1/ERK2 and/or MAPK3/ERK1 may play a role in noradrenaline secretion by sympathetic neurons (By similarity). Phosphorylation at Ser-10 dissociates synapsins from synaptic vesicles.</text>
</comment>
<comment type="similarity">
    <text evidence="7">Belongs to the synapsin family.</text>
</comment>
<proteinExistence type="evidence at protein level"/>
<evidence type="ECO:0000250" key="1"/>
<evidence type="ECO:0000250" key="2">
    <source>
        <dbReference type="UniProtKB" id="Q92777"/>
    </source>
</evidence>
<evidence type="ECO:0000256" key="3">
    <source>
        <dbReference type="SAM" id="MobiDB-lite"/>
    </source>
</evidence>
<evidence type="ECO:0000269" key="4">
    <source>
    </source>
</evidence>
<evidence type="ECO:0000269" key="5">
    <source>
    </source>
</evidence>
<evidence type="ECO:0000303" key="6">
    <source>
    </source>
</evidence>
<evidence type="ECO:0000305" key="7"/>
<evidence type="ECO:0007744" key="8">
    <source>
    </source>
</evidence>
<evidence type="ECO:0007829" key="9">
    <source>
        <dbReference type="PDB" id="1I7N"/>
    </source>
</evidence>
<organism>
    <name type="scientific">Rattus norvegicus</name>
    <name type="common">Rat</name>
    <dbReference type="NCBI Taxonomy" id="10116"/>
    <lineage>
        <taxon>Eukaryota</taxon>
        <taxon>Metazoa</taxon>
        <taxon>Chordata</taxon>
        <taxon>Craniata</taxon>
        <taxon>Vertebrata</taxon>
        <taxon>Euteleostomi</taxon>
        <taxon>Mammalia</taxon>
        <taxon>Eutheria</taxon>
        <taxon>Euarchontoglires</taxon>
        <taxon>Glires</taxon>
        <taxon>Rodentia</taxon>
        <taxon>Myomorpha</taxon>
        <taxon>Muroidea</taxon>
        <taxon>Muridae</taxon>
        <taxon>Murinae</taxon>
        <taxon>Rattus</taxon>
    </lineage>
</organism>
<gene>
    <name type="primary">Syn2</name>
</gene>
<accession>Q63537</accession>
<accession>Q9Z1H0</accession>
<feature type="chain" id="PRO_0000183023" description="Synapsin-2">
    <location>
        <begin position="1"/>
        <end position="586"/>
    </location>
</feature>
<feature type="region of interest" description="A">
    <location>
        <begin position="1"/>
        <end position="29"/>
    </location>
</feature>
<feature type="region of interest" description="Disordered" evidence="3">
    <location>
        <begin position="20"/>
        <end position="84"/>
    </location>
</feature>
<feature type="region of interest" description="B; linker">
    <location>
        <begin position="33"/>
        <end position="113"/>
    </location>
</feature>
<feature type="region of interest" description="C; actin-binding and synaptic-vesicle binding">
    <location>
        <begin position="114"/>
        <end position="421"/>
    </location>
</feature>
<feature type="region of interest" description="Disordered" evidence="3">
    <location>
        <begin position="421"/>
        <end position="549"/>
    </location>
</feature>
<feature type="region of interest" description="G; Pro-rich linker">
    <location>
        <begin position="422"/>
        <end position="458"/>
    </location>
</feature>
<feature type="region of interest" description="H; Pro/Ser-rich linker">
    <location>
        <begin position="459"/>
        <end position="537"/>
    </location>
</feature>
<feature type="region of interest" description="E">
    <location>
        <begin position="538"/>
        <end position="586"/>
    </location>
</feature>
<feature type="compositionally biased region" description="Low complexity" evidence="3">
    <location>
        <begin position="40"/>
        <end position="55"/>
    </location>
</feature>
<feature type="compositionally biased region" description="Pro residues" evidence="3">
    <location>
        <begin position="61"/>
        <end position="77"/>
    </location>
</feature>
<feature type="compositionally biased region" description="Polar residues" evidence="3">
    <location>
        <begin position="421"/>
        <end position="440"/>
    </location>
</feature>
<feature type="compositionally biased region" description="Low complexity" evidence="3">
    <location>
        <begin position="463"/>
        <end position="507"/>
    </location>
</feature>
<feature type="compositionally biased region" description="Low complexity" evidence="3">
    <location>
        <begin position="515"/>
        <end position="528"/>
    </location>
</feature>
<feature type="compositionally biased region" description="Pro residues" evidence="3">
    <location>
        <begin position="529"/>
        <end position="538"/>
    </location>
</feature>
<feature type="modified residue" description="Phosphoserine; by PKA and CaMK1" evidence="4">
    <location>
        <position position="10"/>
    </location>
</feature>
<feature type="modified residue" description="Phosphothreonine" evidence="8">
    <location>
        <position position="422"/>
    </location>
</feature>
<feature type="modified residue" description="Phosphoserine" evidence="8">
    <location>
        <position position="426"/>
    </location>
</feature>
<feature type="splice variant" id="VSP_006322" description="In isoform IIb." evidence="6">
    <original>GPGQPQGMQPPGKVLPPRRLP</original>
    <variation>CLQYILNCNGIAVGPKQVQAS</variation>
    <location>
        <begin position="459"/>
        <end position="479"/>
    </location>
</feature>
<feature type="splice variant" id="VSP_006323" description="In isoform IIb." evidence="6">
    <location>
        <begin position="480"/>
        <end position="586"/>
    </location>
</feature>
<feature type="strand" evidence="9">
    <location>
        <begin position="114"/>
        <end position="120"/>
    </location>
</feature>
<feature type="helix" evidence="9">
    <location>
        <begin position="127"/>
        <end position="131"/>
    </location>
</feature>
<feature type="turn" evidence="9">
    <location>
        <begin position="137"/>
        <end position="139"/>
    </location>
</feature>
<feature type="strand" evidence="9">
    <location>
        <begin position="140"/>
        <end position="147"/>
    </location>
</feature>
<feature type="helix" evidence="9">
    <location>
        <begin position="149"/>
        <end position="151"/>
    </location>
</feature>
<feature type="strand" evidence="9">
    <location>
        <begin position="152"/>
        <end position="157"/>
    </location>
</feature>
<feature type="strand" evidence="9">
    <location>
        <begin position="162"/>
        <end position="168"/>
    </location>
</feature>
<feature type="strand" evidence="9">
    <location>
        <begin position="170"/>
        <end position="179"/>
    </location>
</feature>
<feature type="strand" evidence="9">
    <location>
        <begin position="182"/>
        <end position="186"/>
    </location>
</feature>
<feature type="helix" evidence="9">
    <location>
        <begin position="200"/>
        <end position="208"/>
    </location>
</feature>
<feature type="strand" evidence="9">
    <location>
        <begin position="213"/>
        <end position="215"/>
    </location>
</feature>
<feature type="helix" evidence="9">
    <location>
        <begin position="217"/>
        <end position="222"/>
    </location>
</feature>
<feature type="helix" evidence="9">
    <location>
        <begin position="226"/>
        <end position="240"/>
    </location>
</feature>
<feature type="turn" evidence="9">
    <location>
        <begin position="242"/>
        <end position="244"/>
    </location>
</feature>
<feature type="strand" evidence="9">
    <location>
        <begin position="251"/>
        <end position="255"/>
    </location>
</feature>
<feature type="helix" evidence="9">
    <location>
        <begin position="256"/>
        <end position="259"/>
    </location>
</feature>
<feature type="strand" evidence="9">
    <location>
        <begin position="265"/>
        <end position="273"/>
    </location>
</feature>
<feature type="turn" evidence="9">
    <location>
        <begin position="276"/>
        <end position="279"/>
    </location>
</feature>
<feature type="strand" evidence="9">
    <location>
        <begin position="280"/>
        <end position="283"/>
    </location>
</feature>
<feature type="helix" evidence="9">
    <location>
        <begin position="286"/>
        <end position="299"/>
    </location>
</feature>
<feature type="strand" evidence="9">
    <location>
        <begin position="303"/>
        <end position="307"/>
    </location>
</feature>
<feature type="strand" evidence="9">
    <location>
        <begin position="311"/>
        <end position="320"/>
    </location>
</feature>
<feature type="strand" evidence="9">
    <location>
        <begin position="323"/>
        <end position="332"/>
    </location>
</feature>
<feature type="turn" evidence="9">
    <location>
        <begin position="334"/>
        <end position="336"/>
    </location>
</feature>
<feature type="strand" evidence="9">
    <location>
        <begin position="343"/>
        <end position="348"/>
    </location>
</feature>
<feature type="helix" evidence="9">
    <location>
        <begin position="352"/>
        <end position="361"/>
    </location>
</feature>
<feature type="helix" evidence="9">
    <location>
        <begin position="362"/>
        <end position="366"/>
    </location>
</feature>
<feature type="strand" evidence="9">
    <location>
        <begin position="369"/>
        <end position="378"/>
    </location>
</feature>
<feature type="strand" evidence="9">
    <location>
        <begin position="383"/>
        <end position="389"/>
    </location>
</feature>
<feature type="helix" evidence="9">
    <location>
        <begin position="400"/>
        <end position="418"/>
    </location>
</feature>
<protein>
    <recommendedName>
        <fullName>Synapsin-2</fullName>
    </recommendedName>
    <alternativeName>
        <fullName>Synapsin II</fullName>
    </alternativeName>
</protein>
<reference key="1">
    <citation type="journal article" date="1989" name="Science">
        <title>Synapsins: mosaics of shared and individual domains in a family of synaptic vesicle phosphoproteins.</title>
        <authorList>
            <person name="Suedhof T.C."/>
            <person name="Czernik A.J."/>
            <person name="Kao H.-T."/>
            <person name="Takei K."/>
            <person name="Johnston P.A."/>
            <person name="Horiuchi A."/>
            <person name="Kanazir S.D."/>
            <person name="Wagner M.A."/>
            <person name="Perin M.S."/>
            <person name="de Camilli P."/>
            <person name="Greengard P."/>
        </authorList>
    </citation>
    <scope>NUCLEOTIDE SEQUENCE [MRNA] (ISOFORMS IIA AND IIB)</scope>
    <source>
        <tissue>Brain</tissue>
    </source>
</reference>
<reference key="2">
    <citation type="submission" date="2007-04" db="UniProtKB">
        <authorList>
            <person name="Lubec G."/>
            <person name="Chen W.-Q."/>
        </authorList>
    </citation>
    <scope>PROTEIN SEQUENCE OF 136-143; 178-200; 245-257; 405-414 AND 544-560</scope>
    <scope>IDENTIFICATION BY MASS SPECTROMETRY</scope>
    <source>
        <strain>Sprague-Dawley</strain>
        <tissue>Hippocampus</tissue>
    </source>
</reference>
<reference key="3">
    <citation type="journal article" date="2002" name="Proc. Natl. Acad. Sci. U.S.A.">
        <title>Neuronal nitric-oxide synthase localization mediated by a ternary complex with synapsin and CAPON.</title>
        <authorList>
            <person name="Jaffrey S.R."/>
            <person name="Benfenati F."/>
            <person name="Snowman A.M."/>
            <person name="Czernik A.J."/>
            <person name="Snyder S.H."/>
        </authorList>
    </citation>
    <scope>INTERACTION WITH CAPON</scope>
</reference>
<reference key="4">
    <citation type="journal article" date="1999" name="Neuron">
        <title>A phospho-switch controls the dynamic association of synapsins with synaptic vesicles.</title>
        <authorList>
            <person name="Hosaka M."/>
            <person name="Hammer R.E."/>
            <person name="Sudhof T.C."/>
        </authorList>
    </citation>
    <scope>PHOSPHORYLATION AT SER-10</scope>
    <scope>PHOSPHOLIPID-BINDING REGION</scope>
</reference>
<reference key="5">
    <citation type="journal article" date="2012" name="Nat. Commun.">
        <title>Quantitative maps of protein phosphorylation sites across 14 different rat organs and tissues.</title>
        <authorList>
            <person name="Lundby A."/>
            <person name="Secher A."/>
            <person name="Lage K."/>
            <person name="Nordsborg N.B."/>
            <person name="Dmytriyev A."/>
            <person name="Lundby C."/>
            <person name="Olsen J.V."/>
        </authorList>
    </citation>
    <scope>PHOSPHORYLATION [LARGE SCALE ANALYSIS] AT THR-422 AND SER-426</scope>
    <scope>IDENTIFICATION BY MASS SPECTROMETRY [LARGE SCALE ANALYSIS]</scope>
</reference>
<keyword id="KW-0002">3D-structure</keyword>
<keyword id="KW-0025">Alternative splicing</keyword>
<keyword id="KW-0903">Direct protein sequencing</keyword>
<keyword id="KW-0597">Phosphoprotein</keyword>
<keyword id="KW-1185">Reference proteome</keyword>
<keyword id="KW-0770">Synapse</keyword>
<sequence>MMNFLRRRLSDSSFIANLPNGYMTDLQRPEPQQPPPAPGPGTATASAATSAASPGPERRPPPAQAPAPQPAPQPAPTPSVGSSFFSSLSQAVKQTAASAGLVDAPAPSAASRKAKVLLVVDEPHTDWAKCFRGKKILGDYDIKVEQAEFSELNLVAHADGTYAVDMQVLRNGTKVVRSFRPDFVLIRQHAFGMAENEDFRHLVIGMQYAGLPSINSLESIYNFCDKPWVFAQMVAIFKTLGGEKFPLIEQTYYPNHREMLTLPTFPVVVKIGHAHSGMGKVKVENHYDFQDIASVVALTQTYATAEPFIDAKYDIRVQKIGNNYKAYMRTSISGNWKTNTGSAMLEQIAMSDRYKLWVDACSEMFGGLDICAVKAVHGKDGKDYIFEVMDCSMPLIGEHQVEDRQLITDLVISKMNQLLSRTPALSPQRPLTTQQPQSGTLKEPDSSKTPPQRPAPQGGPGQPQGMQPPGKVLPPRRLPSGPSLPPSSSSSSSSSSSSSAPQRPGGPTSTQVNASSSSNSLAEPQAPQAAPPQKPQPHPQLNKSQSLTNAFSFSESSFFRSSANEDEAKAETIRSLRKSFASLFSD</sequence>
<name>SYN2_RAT</name>